<organism>
    <name type="scientific">Thermotoga maritima (strain ATCC 43589 / DSM 3109 / JCM 10099 / NBRC 100826 / MSB8)</name>
    <dbReference type="NCBI Taxonomy" id="243274"/>
    <lineage>
        <taxon>Bacteria</taxon>
        <taxon>Thermotogati</taxon>
        <taxon>Thermotogota</taxon>
        <taxon>Thermotogae</taxon>
        <taxon>Thermotogales</taxon>
        <taxon>Thermotogaceae</taxon>
        <taxon>Thermotoga</taxon>
    </lineage>
</organism>
<reference key="1">
    <citation type="journal article" date="1999" name="Nature">
        <title>Evidence for lateral gene transfer between Archaea and Bacteria from genome sequence of Thermotoga maritima.</title>
        <authorList>
            <person name="Nelson K.E."/>
            <person name="Clayton R.A."/>
            <person name="Gill S.R."/>
            <person name="Gwinn M.L."/>
            <person name="Dodson R.J."/>
            <person name="Haft D.H."/>
            <person name="Hickey E.K."/>
            <person name="Peterson J.D."/>
            <person name="Nelson W.C."/>
            <person name="Ketchum K.A."/>
            <person name="McDonald L.A."/>
            <person name="Utterback T.R."/>
            <person name="Malek J.A."/>
            <person name="Linher K.D."/>
            <person name="Garrett M.M."/>
            <person name="Stewart A.M."/>
            <person name="Cotton M.D."/>
            <person name="Pratt M.S."/>
            <person name="Phillips C.A."/>
            <person name="Richardson D.L."/>
            <person name="Heidelberg J.F."/>
            <person name="Sutton G.G."/>
            <person name="Fleischmann R.D."/>
            <person name="Eisen J.A."/>
            <person name="White O."/>
            <person name="Salzberg S.L."/>
            <person name="Smith H.O."/>
            <person name="Venter J.C."/>
            <person name="Fraser C.M."/>
        </authorList>
    </citation>
    <scope>NUCLEOTIDE SEQUENCE [LARGE SCALE GENOMIC DNA]</scope>
    <source>
        <strain>ATCC 43589 / DSM 3109 / JCM 10099 / NBRC 100826 / MSB8</strain>
    </source>
</reference>
<reference evidence="6 7 8 9" key="2">
    <citation type="journal article" date="2008" name="Mol. Cell">
        <title>Structural biochemistry of a bacterial checkpoint protein reveals diadenylate cyclase activity regulated by DNA recombination intermediates.</title>
        <authorList>
            <person name="Witte G."/>
            <person name="Hartung S."/>
            <person name="Buttner K."/>
            <person name="Hopfner K.P."/>
        </authorList>
    </citation>
    <scope>X-RAY CRYSTALLOGRAPHY (2.1 ANGSTROMS) OF APOPROTEIN AND IN COMPLEX WITH PRODUCT C-DI-AMP OR ATP ANALOGS</scope>
    <scope>FUNCTION</scope>
    <scope>CATALYTIC ACTIVITY</scope>
    <scope>SUBSTRATE SPECIFICITY</scope>
    <scope>SUBUNIT</scope>
    <scope>DOMAIN</scope>
</reference>
<reference evidence="10 11 12" key="3">
    <citation type="journal article" date="2015" name="Biochem. J.">
        <title>Structural analysis of the diadenylate cyclase reaction of DNA-integrity scanning protein A (DisA) and its inhibition by 3'-dATP.</title>
        <authorList>
            <person name="Muller M."/>
            <person name="Deimling T."/>
            <person name="Hopfner K.P."/>
            <person name="Witte G."/>
        </authorList>
    </citation>
    <scope>X-RAY CRYSTALLOGRAPHY (2.25 ANGSTROMS) IN COMPLEX WITH PRODUCT C-DI-AMP OR ATP ANALOGS AND METAL</scope>
    <scope>FUNCTION</scope>
    <scope>COFACTOR</scope>
    <scope>ACTIVITY REGULATION</scope>
    <scope>SUBUNIT</scope>
    <scope>DOMAIN</scope>
    <scope>MUTAGENESIS OF ASP-75; 107-THR--THR-111; 108-ARG--ARG-110; 128-ARG--ARG-130 AND ARG-130</scope>
</reference>
<dbReference type="EC" id="2.7.7.85" evidence="1 3"/>
<dbReference type="EMBL" id="AE000512">
    <property type="protein sequence ID" value="AAD35292.1"/>
    <property type="molecule type" value="Genomic_DNA"/>
</dbReference>
<dbReference type="PIR" id="B72405">
    <property type="entry name" value="B72405"/>
</dbReference>
<dbReference type="RefSeq" id="NP_228015.1">
    <property type="nucleotide sequence ID" value="NC_000853.1"/>
</dbReference>
<dbReference type="PDB" id="3C1Y">
    <property type="method" value="X-ray"/>
    <property type="resolution" value="2.10 A"/>
    <property type="chains" value="A/B=1-357"/>
</dbReference>
<dbReference type="PDB" id="3C1Z">
    <property type="method" value="X-ray"/>
    <property type="resolution" value="2.30 A"/>
    <property type="chains" value="A/B=1-357"/>
</dbReference>
<dbReference type="PDB" id="3C21">
    <property type="method" value="X-ray"/>
    <property type="resolution" value="2.70 A"/>
    <property type="chains" value="A/B=1-357"/>
</dbReference>
<dbReference type="PDB" id="3C23">
    <property type="method" value="X-ray"/>
    <property type="resolution" value="2.50 A"/>
    <property type="chains" value="A/B=1-357"/>
</dbReference>
<dbReference type="PDB" id="4YVZ">
    <property type="method" value="X-ray"/>
    <property type="resolution" value="2.50 A"/>
    <property type="chains" value="A/B=1-357"/>
</dbReference>
<dbReference type="PDB" id="4YXJ">
    <property type="method" value="X-ray"/>
    <property type="resolution" value="2.55 A"/>
    <property type="chains" value="A/B=1-357"/>
</dbReference>
<dbReference type="PDB" id="4YXM">
    <property type="method" value="X-ray"/>
    <property type="resolution" value="2.25 A"/>
    <property type="chains" value="A/B=1-357"/>
</dbReference>
<dbReference type="PDBsum" id="3C1Y"/>
<dbReference type="PDBsum" id="3C1Z"/>
<dbReference type="PDBsum" id="3C21"/>
<dbReference type="PDBsum" id="3C23"/>
<dbReference type="PDBsum" id="4YVZ"/>
<dbReference type="PDBsum" id="4YXJ"/>
<dbReference type="PDBsum" id="4YXM"/>
<dbReference type="SMR" id="Q9WY43"/>
<dbReference type="FunCoup" id="Q9WY43">
    <property type="interactions" value="9"/>
</dbReference>
<dbReference type="STRING" id="243274.TM_0200"/>
<dbReference type="PaxDb" id="243274-THEMA_03730"/>
<dbReference type="EnsemblBacteria" id="AAD35292">
    <property type="protein sequence ID" value="AAD35292"/>
    <property type="gene ID" value="TM_0200"/>
</dbReference>
<dbReference type="KEGG" id="tma:TM0200"/>
<dbReference type="PATRIC" id="fig|243274.5.peg.202"/>
<dbReference type="eggNOG" id="COG1623">
    <property type="taxonomic scope" value="Bacteria"/>
</dbReference>
<dbReference type="InParanoid" id="Q9WY43"/>
<dbReference type="OrthoDB" id="41841at2"/>
<dbReference type="BRENDA" id="2.7.7.85">
    <property type="organism ID" value="6331"/>
</dbReference>
<dbReference type="EvolutionaryTrace" id="Q9WY43"/>
<dbReference type="Proteomes" id="UP000008183">
    <property type="component" value="Chromosome"/>
</dbReference>
<dbReference type="GO" id="GO:0004016">
    <property type="term" value="F:adenylate cyclase activity"/>
    <property type="evidence" value="ECO:0000318"/>
    <property type="project" value="GO_Central"/>
</dbReference>
<dbReference type="GO" id="GO:0005524">
    <property type="term" value="F:ATP binding"/>
    <property type="evidence" value="ECO:0007669"/>
    <property type="project" value="UniProtKB-UniRule"/>
</dbReference>
<dbReference type="GO" id="GO:0140097">
    <property type="term" value="F:catalytic activity, acting on DNA"/>
    <property type="evidence" value="ECO:0007669"/>
    <property type="project" value="UniProtKB-ARBA"/>
</dbReference>
<dbReference type="GO" id="GO:0106408">
    <property type="term" value="F:diadenylate cyclase activity"/>
    <property type="evidence" value="ECO:0007669"/>
    <property type="project" value="UniProtKB-EC"/>
</dbReference>
<dbReference type="GO" id="GO:0003677">
    <property type="term" value="F:DNA binding"/>
    <property type="evidence" value="ECO:0007669"/>
    <property type="project" value="UniProtKB-UniRule"/>
</dbReference>
<dbReference type="GO" id="GO:0016787">
    <property type="term" value="F:hydrolase activity"/>
    <property type="evidence" value="ECO:0007669"/>
    <property type="project" value="UniProtKB-ARBA"/>
</dbReference>
<dbReference type="GO" id="GO:0006281">
    <property type="term" value="P:DNA repair"/>
    <property type="evidence" value="ECO:0007669"/>
    <property type="project" value="UniProtKB-UniRule"/>
</dbReference>
<dbReference type="FunFam" id="1.20.1260.110:FF:000005">
    <property type="entry name" value="DNA integrity scanning protein DisA"/>
    <property type="match status" value="1"/>
</dbReference>
<dbReference type="FunFam" id="3.40.1700.10:FF:000001">
    <property type="entry name" value="DNA integrity scanning protein DisA"/>
    <property type="match status" value="1"/>
</dbReference>
<dbReference type="Gene3D" id="1.10.150.20">
    <property type="entry name" value="5' to 3' exonuclease, C-terminal subdomain"/>
    <property type="match status" value="1"/>
</dbReference>
<dbReference type="Gene3D" id="1.20.1260.110">
    <property type="entry name" value="DNA integrity scanning linker region"/>
    <property type="match status" value="1"/>
</dbReference>
<dbReference type="Gene3D" id="3.40.1700.10">
    <property type="entry name" value="DNA integrity scanning protein, DisA, N-terminal domain"/>
    <property type="match status" value="1"/>
</dbReference>
<dbReference type="HAMAP" id="MF_01438">
    <property type="entry name" value="DisA"/>
    <property type="match status" value="1"/>
</dbReference>
<dbReference type="InterPro" id="IPR050338">
    <property type="entry name" value="DisA"/>
</dbReference>
<dbReference type="InterPro" id="IPR038331">
    <property type="entry name" value="DisA_sf"/>
</dbReference>
<dbReference type="InterPro" id="IPR036888">
    <property type="entry name" value="DNA_integrity_DisA_N_sf"/>
</dbReference>
<dbReference type="InterPro" id="IPR018906">
    <property type="entry name" value="DNA_integrity_scan_DisA_link"/>
</dbReference>
<dbReference type="InterPro" id="IPR003390">
    <property type="entry name" value="DNA_integrity_scan_DisA_N"/>
</dbReference>
<dbReference type="InterPro" id="IPR023763">
    <property type="entry name" value="DNA_integrity_scanning_protein"/>
</dbReference>
<dbReference type="InterPro" id="IPR000445">
    <property type="entry name" value="HhH_motif"/>
</dbReference>
<dbReference type="InterPro" id="IPR010994">
    <property type="entry name" value="RuvA_2-like"/>
</dbReference>
<dbReference type="NCBIfam" id="NF010009">
    <property type="entry name" value="PRK13482.1"/>
    <property type="match status" value="1"/>
</dbReference>
<dbReference type="PANTHER" id="PTHR34185">
    <property type="entry name" value="DIADENYLATE CYCLASE"/>
    <property type="match status" value="1"/>
</dbReference>
<dbReference type="PANTHER" id="PTHR34185:SF3">
    <property type="entry name" value="DNA INTEGRITY SCANNING PROTEIN DISA"/>
    <property type="match status" value="1"/>
</dbReference>
<dbReference type="Pfam" id="PF02457">
    <property type="entry name" value="DAC"/>
    <property type="match status" value="1"/>
</dbReference>
<dbReference type="Pfam" id="PF10635">
    <property type="entry name" value="DisA-linker"/>
    <property type="match status" value="1"/>
</dbReference>
<dbReference type="Pfam" id="PF00633">
    <property type="entry name" value="HHH"/>
    <property type="match status" value="1"/>
</dbReference>
<dbReference type="SUPFAM" id="SSF47781">
    <property type="entry name" value="RuvA domain 2-like"/>
    <property type="match status" value="1"/>
</dbReference>
<dbReference type="SUPFAM" id="SSF143597">
    <property type="entry name" value="YojJ-like"/>
    <property type="match status" value="1"/>
</dbReference>
<dbReference type="PROSITE" id="PS51794">
    <property type="entry name" value="DAC"/>
    <property type="match status" value="1"/>
</dbReference>
<gene>
    <name evidence="1" type="primary">disA</name>
    <name type="ordered locus">TM_0200</name>
</gene>
<evidence type="ECO:0000255" key="1">
    <source>
        <dbReference type="HAMAP-Rule" id="MF_01438"/>
    </source>
</evidence>
<evidence type="ECO:0000255" key="2">
    <source>
        <dbReference type="PROSITE-ProRule" id="PRU01130"/>
    </source>
</evidence>
<evidence type="ECO:0000269" key="3">
    <source>
    </source>
</evidence>
<evidence type="ECO:0000269" key="4">
    <source>
    </source>
</evidence>
<evidence type="ECO:0000305" key="5">
    <source>
    </source>
</evidence>
<evidence type="ECO:0007744" key="6">
    <source>
        <dbReference type="PDB" id="3C1Y"/>
    </source>
</evidence>
<evidence type="ECO:0007744" key="7">
    <source>
        <dbReference type="PDB" id="3C1Z"/>
    </source>
</evidence>
<evidence type="ECO:0007744" key="8">
    <source>
        <dbReference type="PDB" id="3C21"/>
    </source>
</evidence>
<evidence type="ECO:0007744" key="9">
    <source>
        <dbReference type="PDB" id="3C23"/>
    </source>
</evidence>
<evidence type="ECO:0007744" key="10">
    <source>
        <dbReference type="PDB" id="4YVZ"/>
    </source>
</evidence>
<evidence type="ECO:0007744" key="11">
    <source>
        <dbReference type="PDB" id="4YXJ"/>
    </source>
</evidence>
<evidence type="ECO:0007744" key="12">
    <source>
        <dbReference type="PDB" id="4YXM"/>
    </source>
</evidence>
<evidence type="ECO:0007829" key="13">
    <source>
        <dbReference type="PDB" id="3C1Y"/>
    </source>
</evidence>
<evidence type="ECO:0007829" key="14">
    <source>
        <dbReference type="PDB" id="3C1Z"/>
    </source>
</evidence>
<evidence type="ECO:0007829" key="15">
    <source>
        <dbReference type="PDB" id="3C23"/>
    </source>
</evidence>
<name>DISA_THEMA</name>
<proteinExistence type="evidence at protein level"/>
<accession>Q9WY43</accession>
<comment type="function">
    <text evidence="1">Participates in a DNA-damage check-point. DisA forms globular foci that rapidly scan along the chromosomes searching for lesions.</text>
</comment>
<comment type="function">
    <text evidence="1 3 4">Has diadenylate cyclase activity, catalyzing the condensation of 2 ATP molecules into cyclic di-AMP (c-di-AMP) (PubMed:18439896, PubMed:26014055). c-di-AMP likely acts as a signaling molecule that may couple DNA integrity with a cellular process. This rate-limiting step is the accessibility of the active site; mutating the possible exit tunnel (residues 128-130) increases product 2-fold despite Arg-130 being important for ATP-binding (PubMed:26014055). Does not convert GTP to c-di-GMP (PubMed:18439896).</text>
</comment>
<comment type="catalytic activity">
    <reaction evidence="1 3">
        <text>2 ATP = 3',3'-c-di-AMP + 2 diphosphate</text>
        <dbReference type="Rhea" id="RHEA:35655"/>
        <dbReference type="ChEBI" id="CHEBI:30616"/>
        <dbReference type="ChEBI" id="CHEBI:33019"/>
        <dbReference type="ChEBI" id="CHEBI:71500"/>
        <dbReference type="EC" id="2.7.7.85"/>
    </reaction>
</comment>
<comment type="cofactor">
    <cofactor evidence="1 5">
        <name>Mg(2+)</name>
        <dbReference type="ChEBI" id="CHEBI:18420"/>
    </cofactor>
    <text evidence="4">Crystallized with Mn(2+) to trap in the pre-reaction state.</text>
</comment>
<comment type="activity regulation">
    <text evidence="4">Inhibited by 3'-dATP.</text>
</comment>
<comment type="subunit">
    <text evidence="1 3 4">Homooctamer.</text>
</comment>
<comment type="domain">
    <text evidence="3 4">Consists of three domains: an N-terminal globular domain with diadenylate-cyclase (DAC) activity, a central helical domain and a C-terminal DNA-binding domain.</text>
</comment>
<comment type="similarity">
    <text evidence="1">Belongs to the DisA family.</text>
</comment>
<keyword id="KW-0002">3D-structure</keyword>
<keyword id="KW-0067">ATP-binding</keyword>
<keyword id="KW-0227">DNA damage</keyword>
<keyword id="KW-0234">DNA repair</keyword>
<keyword id="KW-0238">DNA-binding</keyword>
<keyword id="KW-0460">Magnesium</keyword>
<keyword id="KW-0547">Nucleotide-binding</keyword>
<keyword id="KW-0548">Nucleotidyltransferase</keyword>
<keyword id="KW-1185">Reference proteome</keyword>
<keyword id="KW-0808">Transferase</keyword>
<sequence>MGVKSLVPQELIEKIKLISPGTELRKALDDIINANFGALIFLVDDPKKYEDVIQGGFWLDTDFSAEKLYELSKMDGAIVLSEDITKIYYANVHLVPDPTIPTGETGTRHRTAERLAKQTGKVVIAVSRRRNIISLYYKNYKYVVNQVDFLISKVTQAISTLEKYKDNFNKLLSELEVLELENRVTLADVVRTLAKGFELLRIVEEIRPYIVELGEEGRLARMQLRELTEDVDDLLVLLIMDYSSEEVEEETAQNILQDFITRREPSPISISRVLGYDVQQAAQLDDVLVSARGYRLLKTVARIPLSIGYNVVRMFKTLDQISKASVEDLKKVEGIGEKRARAISESISSLKHRKTSE</sequence>
<protein>
    <recommendedName>
        <fullName evidence="1">DNA integrity scanning protein DisA</fullName>
    </recommendedName>
    <alternativeName>
        <fullName evidence="1">Cyclic di-AMP synthase</fullName>
        <shortName evidence="1">c-di-AMP synthase</shortName>
    </alternativeName>
    <alternativeName>
        <fullName evidence="1">Diadenylate cyclase</fullName>
        <ecNumber evidence="1 3">2.7.7.85</ecNumber>
    </alternativeName>
</protein>
<feature type="chain" id="PRO_0000255653" description="DNA integrity scanning protein DisA">
    <location>
        <begin position="1"/>
        <end position="357"/>
    </location>
</feature>
<feature type="domain" description="DAC" evidence="2">
    <location>
        <begin position="8"/>
        <end position="148"/>
    </location>
</feature>
<feature type="binding site" evidence="3 4 6 8 12">
    <location>
        <position position="76"/>
    </location>
    <ligand>
        <name>3',3'-c-di-AMP</name>
        <dbReference type="ChEBI" id="CHEBI:71500"/>
    </ligand>
</feature>
<feature type="binding site" evidence="3 4 6 8 12">
    <location>
        <position position="94"/>
    </location>
    <ligand>
        <name>3',3'-c-di-AMP</name>
        <dbReference type="ChEBI" id="CHEBI:71500"/>
    </ligand>
</feature>
<feature type="binding site" evidence="3 4 8 12">
    <location>
        <position position="107"/>
    </location>
    <ligand>
        <name>3',3'-c-di-AMP</name>
        <dbReference type="ChEBI" id="CHEBI:71500"/>
    </ligand>
</feature>
<feature type="binding site" evidence="3 4 6 8 12">
    <location>
        <position position="111"/>
    </location>
    <ligand>
        <name>3',3'-c-di-AMP</name>
        <dbReference type="ChEBI" id="CHEBI:71500"/>
    </ligand>
</feature>
<feature type="binding site" evidence="3 4 8">
    <location>
        <position position="128"/>
    </location>
    <ligand>
        <name>3',3'-c-di-AMP</name>
        <dbReference type="ChEBI" id="CHEBI:71500"/>
    </ligand>
</feature>
<feature type="mutagenesis site" description="Significant loss of c-di-AMP formation, still forms octamers." evidence="4">
    <original>D</original>
    <variation>N</variation>
    <location>
        <position position="75"/>
    </location>
</feature>
<feature type="mutagenesis site" description="Significant loss of c-di-AMP formation." evidence="4">
    <original>TRHRT</original>
    <variation>VRHRV</variation>
    <location>
        <begin position="107"/>
        <end position="111"/>
    </location>
</feature>
<feature type="mutagenesis site" description="About 90% loss of c-di-AMP formation." evidence="4">
    <original>RHR</original>
    <variation>AAA</variation>
    <location>
        <begin position="108"/>
        <end position="110"/>
    </location>
</feature>
<feature type="mutagenesis site" description="2-fold increase in c-di-AMP formation." evidence="4">
    <original>RRR</original>
    <variation>AAA</variation>
    <location>
        <begin position="128"/>
        <end position="130"/>
    </location>
</feature>
<feature type="mutagenesis site" description="About 90% loss of c-di-AMP formation." evidence="4">
    <original>R</original>
    <variation>A</variation>
    <location>
        <position position="130"/>
    </location>
</feature>
<feature type="helix" evidence="13">
    <location>
        <begin position="9"/>
        <end position="15"/>
    </location>
</feature>
<feature type="helix" evidence="13">
    <location>
        <begin position="16"/>
        <end position="18"/>
    </location>
</feature>
<feature type="helix" evidence="13">
    <location>
        <begin position="23"/>
        <end position="33"/>
    </location>
</feature>
<feature type="strand" evidence="13">
    <location>
        <begin position="38"/>
        <end position="42"/>
    </location>
</feature>
<feature type="helix" evidence="13">
    <location>
        <begin position="46"/>
        <end position="49"/>
    </location>
</feature>
<feature type="turn" evidence="13">
    <location>
        <begin position="50"/>
        <end position="52"/>
    </location>
</feature>
<feature type="strand" evidence="13">
    <location>
        <begin position="53"/>
        <end position="62"/>
    </location>
</feature>
<feature type="helix" evidence="13">
    <location>
        <begin position="65"/>
        <end position="71"/>
    </location>
</feature>
<feature type="strand" evidence="13">
    <location>
        <begin position="74"/>
        <end position="80"/>
    </location>
</feature>
<feature type="strand" evidence="13">
    <location>
        <begin position="84"/>
        <end position="94"/>
    </location>
</feature>
<feature type="helix" evidence="13">
    <location>
        <begin position="107"/>
        <end position="119"/>
    </location>
</feature>
<feature type="strand" evidence="13">
    <location>
        <begin position="120"/>
        <end position="126"/>
    </location>
</feature>
<feature type="strand" evidence="14">
    <location>
        <begin position="128"/>
        <end position="131"/>
    </location>
</feature>
<feature type="strand" evidence="13">
    <location>
        <begin position="133"/>
        <end position="136"/>
    </location>
</feature>
<feature type="strand" evidence="13">
    <location>
        <begin position="141"/>
        <end position="144"/>
    </location>
</feature>
<feature type="helix" evidence="13">
    <location>
        <begin position="147"/>
        <end position="180"/>
    </location>
</feature>
<feature type="helix" evidence="13">
    <location>
        <begin position="186"/>
        <end position="212"/>
    </location>
</feature>
<feature type="helix" evidence="13">
    <location>
        <begin position="214"/>
        <end position="217"/>
    </location>
</feature>
<feature type="helix" evidence="13">
    <location>
        <begin position="218"/>
        <end position="228"/>
    </location>
</feature>
<feature type="helix" evidence="13">
    <location>
        <begin position="231"/>
        <end position="242"/>
    </location>
</feature>
<feature type="strand" evidence="13">
    <location>
        <begin position="243"/>
        <end position="245"/>
    </location>
</feature>
<feature type="helix" evidence="13">
    <location>
        <begin position="249"/>
        <end position="260"/>
    </location>
</feature>
<feature type="strand" evidence="15">
    <location>
        <begin position="261"/>
        <end position="263"/>
    </location>
</feature>
<feature type="helix" evidence="13">
    <location>
        <begin position="267"/>
        <end position="273"/>
    </location>
</feature>
<feature type="helix" evidence="13">
    <location>
        <begin position="281"/>
        <end position="286"/>
    </location>
</feature>
<feature type="helix" evidence="13">
    <location>
        <begin position="294"/>
        <end position="299"/>
    </location>
</feature>
<feature type="helix" evidence="13">
    <location>
        <begin position="305"/>
        <end position="315"/>
    </location>
</feature>
<feature type="helix" evidence="13">
    <location>
        <begin position="318"/>
        <end position="321"/>
    </location>
</feature>
<feature type="helix" evidence="13">
    <location>
        <begin position="326"/>
        <end position="329"/>
    </location>
</feature>
<feature type="helix" evidence="13">
    <location>
        <begin position="337"/>
        <end position="354"/>
    </location>
</feature>